<gene>
    <name evidence="1" type="primary">ruvA</name>
    <name type="ordered locus">SP70585_0242</name>
</gene>
<protein>
    <recommendedName>
        <fullName evidence="1">Holliday junction branch migration complex subunit RuvA</fullName>
    </recommendedName>
</protein>
<sequence length="197" mass="21650">MYAYLKGIITKITAKYIVLETNGIGYILHVANPYAYSGQVNQEDQIYVHQVVREDAHLLYGFRSEDEKKLFLSLISVSGIGPVSALAIIAADDNAGLVQAIETKNITYLTKFPKIGKKTAQQMVLDLEGKVVVAGDDLPAKVAVQASAENQELEEAMEAMLALGYKATELKKIKKFFEGTTDTAENYIKSALKMLVK</sequence>
<comment type="function">
    <text evidence="1">The RuvA-RuvB-RuvC complex processes Holliday junction (HJ) DNA during genetic recombination and DNA repair, while the RuvA-RuvB complex plays an important role in the rescue of blocked DNA replication forks via replication fork reversal (RFR). RuvA specifically binds to HJ cruciform DNA, conferring on it an open structure. The RuvB hexamer acts as an ATP-dependent pump, pulling dsDNA into and through the RuvAB complex. HJ branch migration allows RuvC to scan DNA until it finds its consensus sequence, where it cleaves and resolves the cruciform DNA.</text>
</comment>
<comment type="subunit">
    <text evidence="1">Homotetramer. Forms an RuvA(8)-RuvB(12)-Holliday junction (HJ) complex. HJ DNA is sandwiched between 2 RuvA tetramers; dsDNA enters through RuvA and exits via RuvB. An RuvB hexamer assembles on each DNA strand where it exits the tetramer. Each RuvB hexamer is contacted by two RuvA subunits (via domain III) on 2 adjacent RuvB subunits; this complex drives branch migration. In the full resolvosome a probable DNA-RuvA(4)-RuvB(12)-RuvC(2) complex forms which resolves the HJ.</text>
</comment>
<comment type="subcellular location">
    <subcellularLocation>
        <location evidence="1">Cytoplasm</location>
    </subcellularLocation>
</comment>
<comment type="domain">
    <text evidence="1">Has three domains with a flexible linker between the domains II and III and assumes an 'L' shape. Domain III is highly mobile and contacts RuvB.</text>
</comment>
<comment type="similarity">
    <text evidence="1">Belongs to the RuvA family.</text>
</comment>
<proteinExistence type="inferred from homology"/>
<dbReference type="EMBL" id="CP000918">
    <property type="protein sequence ID" value="ACO17024.1"/>
    <property type="molecule type" value="Genomic_DNA"/>
</dbReference>
<dbReference type="RefSeq" id="WP_000271493.1">
    <property type="nucleotide sequence ID" value="NC_012468.1"/>
</dbReference>
<dbReference type="SMR" id="C1CAI9"/>
<dbReference type="GeneID" id="45652332"/>
<dbReference type="KEGG" id="snm:SP70585_0242"/>
<dbReference type="HOGENOM" id="CLU_087936_1_0_9"/>
<dbReference type="Proteomes" id="UP000002211">
    <property type="component" value="Chromosome"/>
</dbReference>
<dbReference type="GO" id="GO:0005737">
    <property type="term" value="C:cytoplasm"/>
    <property type="evidence" value="ECO:0007669"/>
    <property type="project" value="UniProtKB-SubCell"/>
</dbReference>
<dbReference type="GO" id="GO:0009379">
    <property type="term" value="C:Holliday junction helicase complex"/>
    <property type="evidence" value="ECO:0007669"/>
    <property type="project" value="InterPro"/>
</dbReference>
<dbReference type="GO" id="GO:0048476">
    <property type="term" value="C:Holliday junction resolvase complex"/>
    <property type="evidence" value="ECO:0007669"/>
    <property type="project" value="UniProtKB-UniRule"/>
</dbReference>
<dbReference type="GO" id="GO:0005524">
    <property type="term" value="F:ATP binding"/>
    <property type="evidence" value="ECO:0007669"/>
    <property type="project" value="InterPro"/>
</dbReference>
<dbReference type="GO" id="GO:0000400">
    <property type="term" value="F:four-way junction DNA binding"/>
    <property type="evidence" value="ECO:0007669"/>
    <property type="project" value="UniProtKB-UniRule"/>
</dbReference>
<dbReference type="GO" id="GO:0009378">
    <property type="term" value="F:four-way junction helicase activity"/>
    <property type="evidence" value="ECO:0007669"/>
    <property type="project" value="InterPro"/>
</dbReference>
<dbReference type="GO" id="GO:0006310">
    <property type="term" value="P:DNA recombination"/>
    <property type="evidence" value="ECO:0007669"/>
    <property type="project" value="UniProtKB-UniRule"/>
</dbReference>
<dbReference type="GO" id="GO:0006281">
    <property type="term" value="P:DNA repair"/>
    <property type="evidence" value="ECO:0007669"/>
    <property type="project" value="UniProtKB-UniRule"/>
</dbReference>
<dbReference type="CDD" id="cd14332">
    <property type="entry name" value="UBA_RuvA_C"/>
    <property type="match status" value="1"/>
</dbReference>
<dbReference type="Gene3D" id="1.10.150.20">
    <property type="entry name" value="5' to 3' exonuclease, C-terminal subdomain"/>
    <property type="match status" value="1"/>
</dbReference>
<dbReference type="Gene3D" id="1.10.8.10">
    <property type="entry name" value="DNA helicase RuvA subunit, C-terminal domain"/>
    <property type="match status" value="1"/>
</dbReference>
<dbReference type="Gene3D" id="2.40.50.140">
    <property type="entry name" value="Nucleic acid-binding proteins"/>
    <property type="match status" value="1"/>
</dbReference>
<dbReference type="HAMAP" id="MF_00031">
    <property type="entry name" value="DNA_HJ_migration_RuvA"/>
    <property type="match status" value="1"/>
</dbReference>
<dbReference type="InterPro" id="IPR013849">
    <property type="entry name" value="DNA_helicase_Holl-junc_RuvA_I"/>
</dbReference>
<dbReference type="InterPro" id="IPR003583">
    <property type="entry name" value="Hlx-hairpin-Hlx_DNA-bd_motif"/>
</dbReference>
<dbReference type="InterPro" id="IPR012340">
    <property type="entry name" value="NA-bd_OB-fold"/>
</dbReference>
<dbReference type="InterPro" id="IPR000085">
    <property type="entry name" value="RuvA"/>
</dbReference>
<dbReference type="InterPro" id="IPR010994">
    <property type="entry name" value="RuvA_2-like"/>
</dbReference>
<dbReference type="InterPro" id="IPR011114">
    <property type="entry name" value="RuvA_C"/>
</dbReference>
<dbReference type="InterPro" id="IPR036267">
    <property type="entry name" value="RuvA_C_sf"/>
</dbReference>
<dbReference type="NCBIfam" id="TIGR00084">
    <property type="entry name" value="ruvA"/>
    <property type="match status" value="1"/>
</dbReference>
<dbReference type="Pfam" id="PF14520">
    <property type="entry name" value="HHH_5"/>
    <property type="match status" value="1"/>
</dbReference>
<dbReference type="Pfam" id="PF07499">
    <property type="entry name" value="RuvA_C"/>
    <property type="match status" value="1"/>
</dbReference>
<dbReference type="Pfam" id="PF01330">
    <property type="entry name" value="RuvA_N"/>
    <property type="match status" value="1"/>
</dbReference>
<dbReference type="SMART" id="SM00278">
    <property type="entry name" value="HhH1"/>
    <property type="match status" value="2"/>
</dbReference>
<dbReference type="SUPFAM" id="SSF46929">
    <property type="entry name" value="DNA helicase RuvA subunit, C-terminal domain"/>
    <property type="match status" value="1"/>
</dbReference>
<dbReference type="SUPFAM" id="SSF50249">
    <property type="entry name" value="Nucleic acid-binding proteins"/>
    <property type="match status" value="1"/>
</dbReference>
<dbReference type="SUPFAM" id="SSF47781">
    <property type="entry name" value="RuvA domain 2-like"/>
    <property type="match status" value="1"/>
</dbReference>
<feature type="chain" id="PRO_1000116980" description="Holliday junction branch migration complex subunit RuvA">
    <location>
        <begin position="1"/>
        <end position="197"/>
    </location>
</feature>
<feature type="region of interest" description="Domain I" evidence="1">
    <location>
        <begin position="1"/>
        <end position="63"/>
    </location>
</feature>
<feature type="region of interest" description="Domain II" evidence="1">
    <location>
        <begin position="64"/>
        <end position="142"/>
    </location>
</feature>
<feature type="region of interest" description="Flexible linker" evidence="1">
    <location>
        <begin position="143"/>
        <end position="147"/>
    </location>
</feature>
<feature type="region of interest" description="Domain III" evidence="1">
    <location>
        <begin position="148"/>
        <end position="197"/>
    </location>
</feature>
<name>RUVA_STRP7</name>
<reference key="1">
    <citation type="journal article" date="2010" name="Genome Biol.">
        <title>Structure and dynamics of the pan-genome of Streptococcus pneumoniae and closely related species.</title>
        <authorList>
            <person name="Donati C."/>
            <person name="Hiller N.L."/>
            <person name="Tettelin H."/>
            <person name="Muzzi A."/>
            <person name="Croucher N.J."/>
            <person name="Angiuoli S.V."/>
            <person name="Oggioni M."/>
            <person name="Dunning Hotopp J.C."/>
            <person name="Hu F.Z."/>
            <person name="Riley D.R."/>
            <person name="Covacci A."/>
            <person name="Mitchell T.J."/>
            <person name="Bentley S.D."/>
            <person name="Kilian M."/>
            <person name="Ehrlich G.D."/>
            <person name="Rappuoli R."/>
            <person name="Moxon E.R."/>
            <person name="Masignani V."/>
        </authorList>
    </citation>
    <scope>NUCLEOTIDE SEQUENCE [LARGE SCALE GENOMIC DNA]</scope>
    <source>
        <strain>70585</strain>
    </source>
</reference>
<organism>
    <name type="scientific">Streptococcus pneumoniae (strain 70585)</name>
    <dbReference type="NCBI Taxonomy" id="488221"/>
    <lineage>
        <taxon>Bacteria</taxon>
        <taxon>Bacillati</taxon>
        <taxon>Bacillota</taxon>
        <taxon>Bacilli</taxon>
        <taxon>Lactobacillales</taxon>
        <taxon>Streptococcaceae</taxon>
        <taxon>Streptococcus</taxon>
    </lineage>
</organism>
<accession>C1CAI9</accession>
<keyword id="KW-0963">Cytoplasm</keyword>
<keyword id="KW-0227">DNA damage</keyword>
<keyword id="KW-0233">DNA recombination</keyword>
<keyword id="KW-0234">DNA repair</keyword>
<keyword id="KW-0238">DNA-binding</keyword>
<evidence type="ECO:0000255" key="1">
    <source>
        <dbReference type="HAMAP-Rule" id="MF_00031"/>
    </source>
</evidence>